<sequence>MPAKTATAVKRTTTTKKSAAKRKTSKAVKKAGKRTQSKAKGAQKVKKAATRRTPSKSAGARKATKKAGARKASTKRSATKKTTAAPAAAAAPATDAPAAAATPSKATGSAKKASARKSSAKKPAKGGKKKSAKKN</sequence>
<evidence type="ECO:0000256" key="1">
    <source>
        <dbReference type="SAM" id="MobiDB-lite"/>
    </source>
</evidence>
<name>H1_EUPEU</name>
<comment type="function">
    <text>Histones H1 are necessary for the condensation of nucleosome chains into higher-order structures.</text>
</comment>
<comment type="subcellular location">
    <subcellularLocation>
        <location>Nucleus</location>
    </subcellularLocation>
    <subcellularLocation>
        <location>Chromosome</location>
    </subcellularLocation>
    <text>Macronuclei.</text>
</comment>
<organism>
    <name type="scientific">Euplotes eurystomus</name>
    <name type="common">Ciliate</name>
    <dbReference type="NCBI Taxonomy" id="5941"/>
    <lineage>
        <taxon>Eukaryota</taxon>
        <taxon>Sar</taxon>
        <taxon>Alveolata</taxon>
        <taxon>Ciliophora</taxon>
        <taxon>Intramacronucleata</taxon>
        <taxon>Spirotrichea</taxon>
        <taxon>Hypotrichia</taxon>
        <taxon>Euplotida</taxon>
        <taxon>Euplotidae</taxon>
        <taxon>Euplotes</taxon>
    </lineage>
</organism>
<dbReference type="EMBL" id="L15293">
    <property type="protein sequence ID" value="AAA29125.1"/>
    <property type="molecule type" value="Genomic_DNA"/>
</dbReference>
<dbReference type="PIR" id="S34952">
    <property type="entry name" value="S34952"/>
</dbReference>
<dbReference type="GO" id="GO:0005694">
    <property type="term" value="C:chromosome"/>
    <property type="evidence" value="ECO:0007669"/>
    <property type="project" value="UniProtKB-SubCell"/>
</dbReference>
<dbReference type="GO" id="GO:0005634">
    <property type="term" value="C:nucleus"/>
    <property type="evidence" value="ECO:0007669"/>
    <property type="project" value="UniProtKB-SubCell"/>
</dbReference>
<dbReference type="GO" id="GO:0003677">
    <property type="term" value="F:DNA binding"/>
    <property type="evidence" value="ECO:0007669"/>
    <property type="project" value="UniProtKB-KW"/>
</dbReference>
<accession>P32103</accession>
<feature type="initiator methionine" description="Removed">
    <location>
        <position position="1"/>
    </location>
</feature>
<feature type="chain" id="PRO_0000195978" description="Histone H1, macronuclear">
    <location>
        <begin position="2"/>
        <end position="135"/>
    </location>
</feature>
<feature type="region of interest" description="Disordered" evidence="1">
    <location>
        <begin position="1"/>
        <end position="135"/>
    </location>
</feature>
<feature type="compositionally biased region" description="Low complexity" evidence="1">
    <location>
        <begin position="1"/>
        <end position="17"/>
    </location>
</feature>
<feature type="compositionally biased region" description="Basic residues" evidence="1">
    <location>
        <begin position="18"/>
        <end position="54"/>
    </location>
</feature>
<feature type="compositionally biased region" description="Basic residues" evidence="1">
    <location>
        <begin position="62"/>
        <end position="79"/>
    </location>
</feature>
<feature type="compositionally biased region" description="Low complexity" evidence="1">
    <location>
        <begin position="80"/>
        <end position="112"/>
    </location>
</feature>
<feature type="compositionally biased region" description="Basic residues" evidence="1">
    <location>
        <begin position="113"/>
        <end position="135"/>
    </location>
</feature>
<keyword id="KW-0158">Chromosome</keyword>
<keyword id="KW-0903">Direct protein sequencing</keyword>
<keyword id="KW-0238">DNA-binding</keyword>
<keyword id="KW-0539">Nucleus</keyword>
<protein>
    <recommendedName>
        <fullName>Histone H1, macronuclear</fullName>
    </recommendedName>
</protein>
<proteinExistence type="evidence at protein level"/>
<reference key="1">
    <citation type="journal article" date="1993" name="Nucleic Acids Res.">
        <title>Cloning and analysis of the macronuclear gene for histone H1 from Euplotes eurystomus.</title>
        <authorList>
            <person name="Hauser L.J."/>
            <person name="Treat M.L."/>
            <person name="Olins D.E."/>
        </authorList>
    </citation>
    <scope>NUCLEOTIDE SEQUENCE [GENOMIC DNA]</scope>
    <scope>PARTIAL PROTEIN SEQUENCE</scope>
</reference>